<name>UBIX_NEIMB</name>
<dbReference type="EC" id="2.5.1.129" evidence="1"/>
<dbReference type="EMBL" id="AE002098">
    <property type="protein sequence ID" value="AAF42274.1"/>
    <property type="status" value="ALT_INIT"/>
    <property type="molecule type" value="Genomic_DNA"/>
</dbReference>
<dbReference type="PIR" id="B81023">
    <property type="entry name" value="B81023"/>
</dbReference>
<dbReference type="RefSeq" id="NP_274939.1">
    <property type="nucleotide sequence ID" value="NC_003112.2"/>
</dbReference>
<dbReference type="RefSeq" id="WP_002225832.1">
    <property type="nucleotide sequence ID" value="NC_003112.2"/>
</dbReference>
<dbReference type="SMR" id="Q9JXP4"/>
<dbReference type="FunCoup" id="Q9JXP4">
    <property type="interactions" value="210"/>
</dbReference>
<dbReference type="STRING" id="122586.NMB1945"/>
<dbReference type="PaxDb" id="122586-NMB1945"/>
<dbReference type="KEGG" id="nme:NMB1945"/>
<dbReference type="PATRIC" id="fig|122586.8.peg.2475"/>
<dbReference type="HOGENOM" id="CLU_074522_0_1_4"/>
<dbReference type="InParanoid" id="Q9JXP4"/>
<dbReference type="OrthoDB" id="9781577at2"/>
<dbReference type="Proteomes" id="UP000000425">
    <property type="component" value="Chromosome"/>
</dbReference>
<dbReference type="GO" id="GO:0016831">
    <property type="term" value="F:carboxy-lyase activity"/>
    <property type="evidence" value="ECO:0000318"/>
    <property type="project" value="GO_Central"/>
</dbReference>
<dbReference type="GO" id="GO:0106141">
    <property type="term" value="F:flavin prenyltransferase activity"/>
    <property type="evidence" value="ECO:0007669"/>
    <property type="project" value="UniProtKB-EC"/>
</dbReference>
<dbReference type="FunFam" id="3.40.50.1950:FF:000001">
    <property type="entry name" value="Flavin prenyltransferase UbiX"/>
    <property type="match status" value="1"/>
</dbReference>
<dbReference type="Gene3D" id="3.40.50.1950">
    <property type="entry name" value="Flavin prenyltransferase-like"/>
    <property type="match status" value="1"/>
</dbReference>
<dbReference type="HAMAP" id="MF_01984">
    <property type="entry name" value="ubiX_pad"/>
    <property type="match status" value="1"/>
</dbReference>
<dbReference type="InterPro" id="IPR036551">
    <property type="entry name" value="Flavin_trans-like"/>
</dbReference>
<dbReference type="InterPro" id="IPR003382">
    <property type="entry name" value="Flavoprotein"/>
</dbReference>
<dbReference type="InterPro" id="IPR004507">
    <property type="entry name" value="UbiX-like"/>
</dbReference>
<dbReference type="NCBIfam" id="NF004685">
    <property type="entry name" value="PRK06029.1"/>
    <property type="match status" value="1"/>
</dbReference>
<dbReference type="NCBIfam" id="TIGR00421">
    <property type="entry name" value="ubiX_pad"/>
    <property type="match status" value="1"/>
</dbReference>
<dbReference type="PANTHER" id="PTHR43374">
    <property type="entry name" value="FLAVIN PRENYLTRANSFERASE"/>
    <property type="match status" value="1"/>
</dbReference>
<dbReference type="PANTHER" id="PTHR43374:SF1">
    <property type="entry name" value="FLAVIN PRENYLTRANSFERASE PAD1, MITOCHONDRIAL"/>
    <property type="match status" value="1"/>
</dbReference>
<dbReference type="Pfam" id="PF02441">
    <property type="entry name" value="Flavoprotein"/>
    <property type="match status" value="1"/>
</dbReference>
<dbReference type="SUPFAM" id="SSF52507">
    <property type="entry name" value="Homo-oligomeric flavin-containing Cys decarboxylases, HFCD"/>
    <property type="match status" value="1"/>
</dbReference>
<comment type="function">
    <text evidence="1">Flavin prenyltransferase that catalyzes the synthesis of the prenylated FMN cofactor (prenyl-FMN) for 4-hydroxy-3-polyprenylbenzoic acid decarboxylase UbiD. The prenyltransferase is metal-independent and links a dimethylallyl moiety from dimethylallyl monophosphate (DMAP) to the flavin N5 and C6 atoms of FMN.</text>
</comment>
<comment type="catalytic activity">
    <reaction evidence="1">
        <text>dimethylallyl phosphate + FMNH2 = prenylated FMNH2 + phosphate</text>
        <dbReference type="Rhea" id="RHEA:37743"/>
        <dbReference type="ChEBI" id="CHEBI:43474"/>
        <dbReference type="ChEBI" id="CHEBI:57618"/>
        <dbReference type="ChEBI" id="CHEBI:87467"/>
        <dbReference type="ChEBI" id="CHEBI:88052"/>
        <dbReference type="EC" id="2.5.1.129"/>
    </reaction>
</comment>
<comment type="similarity">
    <text evidence="1">Belongs to the UbiX/PAD1 family.</text>
</comment>
<comment type="sequence caution" evidence="2">
    <conflict type="erroneous initiation">
        <sequence resource="EMBL-CDS" id="AAF42274"/>
    </conflict>
</comment>
<protein>
    <recommendedName>
        <fullName evidence="1">Flavin prenyltransferase UbiX</fullName>
        <ecNumber evidence="1">2.5.1.129</ecNumber>
    </recommendedName>
</protein>
<evidence type="ECO:0000255" key="1">
    <source>
        <dbReference type="HAMAP-Rule" id="MF_01984"/>
    </source>
</evidence>
<evidence type="ECO:0000305" key="2"/>
<keyword id="KW-0285">Flavoprotein</keyword>
<keyword id="KW-0288">FMN</keyword>
<keyword id="KW-0637">Prenyltransferase</keyword>
<keyword id="KW-1185">Reference proteome</keyword>
<keyword id="KW-0808">Transferase</keyword>
<gene>
    <name evidence="1" type="primary">ubiX</name>
    <name type="ordered locus">NMB1945</name>
</gene>
<accession>Q9JXP4</accession>
<feature type="chain" id="PRO_0000134969" description="Flavin prenyltransferase UbiX">
    <location>
        <begin position="1"/>
        <end position="189"/>
    </location>
</feature>
<feature type="binding site" evidence="1">
    <location>
        <begin position="11"/>
        <end position="13"/>
    </location>
    <ligand>
        <name>FMN</name>
        <dbReference type="ChEBI" id="CHEBI:58210"/>
    </ligand>
</feature>
<feature type="binding site" evidence="1">
    <location>
        <position position="37"/>
    </location>
    <ligand>
        <name>FMN</name>
        <dbReference type="ChEBI" id="CHEBI:58210"/>
    </ligand>
</feature>
<feature type="binding site" evidence="1">
    <location>
        <begin position="88"/>
        <end position="91"/>
    </location>
    <ligand>
        <name>FMN</name>
        <dbReference type="ChEBI" id="CHEBI:58210"/>
    </ligand>
</feature>
<feature type="binding site" evidence="1">
    <location>
        <position position="123"/>
    </location>
    <ligand>
        <name>FMN</name>
        <dbReference type="ChEBI" id="CHEBI:58210"/>
    </ligand>
</feature>
<feature type="binding site" evidence="1">
    <location>
        <position position="153"/>
    </location>
    <ligand>
        <name>dimethylallyl phosphate</name>
        <dbReference type="ChEBI" id="CHEBI:88052"/>
    </ligand>
</feature>
<organism>
    <name type="scientific">Neisseria meningitidis serogroup B (strain ATCC BAA-335 / MC58)</name>
    <dbReference type="NCBI Taxonomy" id="122586"/>
    <lineage>
        <taxon>Bacteria</taxon>
        <taxon>Pseudomonadati</taxon>
        <taxon>Pseudomonadota</taxon>
        <taxon>Betaproteobacteria</taxon>
        <taxon>Neisseriales</taxon>
        <taxon>Neisseriaceae</taxon>
        <taxon>Neisseria</taxon>
    </lineage>
</organism>
<reference key="1">
    <citation type="journal article" date="2000" name="Science">
        <title>Complete genome sequence of Neisseria meningitidis serogroup B strain MC58.</title>
        <authorList>
            <person name="Tettelin H."/>
            <person name="Saunders N.J."/>
            <person name="Heidelberg J.F."/>
            <person name="Jeffries A.C."/>
            <person name="Nelson K.E."/>
            <person name="Eisen J.A."/>
            <person name="Ketchum K.A."/>
            <person name="Hood D.W."/>
            <person name="Peden J.F."/>
            <person name="Dodson R.J."/>
            <person name="Nelson W.C."/>
            <person name="Gwinn M.L."/>
            <person name="DeBoy R.T."/>
            <person name="Peterson J.D."/>
            <person name="Hickey E.K."/>
            <person name="Haft D.H."/>
            <person name="Salzberg S.L."/>
            <person name="White O."/>
            <person name="Fleischmann R.D."/>
            <person name="Dougherty B.A."/>
            <person name="Mason T.M."/>
            <person name="Ciecko A."/>
            <person name="Parksey D.S."/>
            <person name="Blair E."/>
            <person name="Cittone H."/>
            <person name="Clark E.B."/>
            <person name="Cotton M.D."/>
            <person name="Utterback T.R."/>
            <person name="Khouri H.M."/>
            <person name="Qin H."/>
            <person name="Vamathevan J.J."/>
            <person name="Gill J."/>
            <person name="Scarlato V."/>
            <person name="Masignani V."/>
            <person name="Pizza M."/>
            <person name="Grandi G."/>
            <person name="Sun L."/>
            <person name="Smith H.O."/>
            <person name="Fraser C.M."/>
            <person name="Moxon E.R."/>
            <person name="Rappuoli R."/>
            <person name="Venter J.C."/>
        </authorList>
    </citation>
    <scope>NUCLEOTIDE SEQUENCE [LARGE SCALE GENOMIC DNA]</scope>
    <source>
        <strain>ATCC BAA-335 / MC58</strain>
    </source>
</reference>
<proteinExistence type="inferred from homology"/>
<sequence>MVRRLIIGISGASGFQYGVKALELLRAQDVETHLVVSKGAEMARASETAYARDEVYALADFVHPIGNIGACIASGTFKTDGMLVAPCSMRTLASVAHGFGDNLLTRAADVVLKERRRLVLMVRETPLNLAHLDNMKRVTEMGGVVFPPVPAMYRKPQTADDIVAHSVAHALSLFGIDTPDSAEWQGMAD</sequence>